<feature type="initiator methionine" description="Removed" evidence="1">
    <location>
        <position position="1"/>
    </location>
</feature>
<feature type="chain" id="PRO_0000244830" description="Histone H2B type 1-B">
    <location>
        <begin position="2"/>
        <end position="126"/>
    </location>
</feature>
<feature type="region of interest" description="Disordered" evidence="8">
    <location>
        <begin position="1"/>
        <end position="36"/>
    </location>
</feature>
<feature type="compositionally biased region" description="Low complexity" evidence="8">
    <location>
        <begin position="1"/>
        <end position="12"/>
    </location>
</feature>
<feature type="modified residue" description="N-acetylproline" evidence="1">
    <location>
        <position position="2"/>
    </location>
</feature>
<feature type="modified residue" description="ADP-ribosyl glutamic acid" evidence="2">
    <location>
        <position position="3"/>
    </location>
</feature>
<feature type="modified residue" description="N6-(2-hydroxyisobutyryl)lysine; alternate" evidence="14">
    <location>
        <position position="6"/>
    </location>
</feature>
<feature type="modified residue" description="N6-(beta-hydroxybutyryl)lysine; alternate" evidence="15">
    <location>
        <position position="6"/>
    </location>
</feature>
<feature type="modified residue" description="N6-acetyllysine; alternate" evidence="20">
    <location>
        <position position="6"/>
    </location>
</feature>
<feature type="modified residue" description="N6-butyryllysine; alternate" evidence="2">
    <location>
        <position position="6"/>
    </location>
</feature>
<feature type="modified residue" description="N6-crotonyllysine; alternate" evidence="12">
    <location>
        <position position="6"/>
    </location>
</feature>
<feature type="modified residue" description="N6-lactoyllysine; alternate" evidence="16">
    <location>
        <position position="6"/>
    </location>
</feature>
<feature type="modified residue" description="ADP-ribosylserine" evidence="2">
    <location>
        <position position="7"/>
    </location>
</feature>
<feature type="modified residue" description="N6-(beta-hydroxybutyryl)lysine; alternate" evidence="15">
    <location>
        <position position="12"/>
    </location>
</feature>
<feature type="modified residue" description="N6-acetyllysine; alternate" evidence="20">
    <location>
        <position position="12"/>
    </location>
</feature>
<feature type="modified residue" description="N6-crotonyllysine; alternate" evidence="12">
    <location>
        <position position="12"/>
    </location>
</feature>
<feature type="modified residue" description="N6-lactoyllysine; alternate" evidence="16">
    <location>
        <position position="12"/>
    </location>
</feature>
<feature type="modified residue" description="N6-(2-hydroxyisobutyryl)lysine; alternate" evidence="14">
    <location>
        <position position="13"/>
    </location>
</feature>
<feature type="modified residue" description="N6-acetyllysine; alternate" evidence="2">
    <location>
        <position position="13"/>
    </location>
</feature>
<feature type="modified residue" description="N6-crotonyllysine; alternate" evidence="12">
    <location>
        <position position="13"/>
    </location>
</feature>
<feature type="modified residue" description="Phosphoserine; by STK4/MST1" evidence="9 10">
    <location>
        <position position="15"/>
    </location>
</feature>
<feature type="modified residue" description="N6-acetyllysine; alternate" evidence="2">
    <location>
        <position position="16"/>
    </location>
</feature>
<feature type="modified residue" description="N6-crotonyllysine; alternate" evidence="12">
    <location>
        <position position="16"/>
    </location>
</feature>
<feature type="modified residue" description="N6-lactoyllysine; alternate" evidence="16">
    <location>
        <position position="16"/>
    </location>
</feature>
<feature type="modified residue" description="N6-acetyllysine; alternate" evidence="20">
    <location>
        <position position="17"/>
    </location>
</feature>
<feature type="modified residue" description="N6-crotonyllysine; alternate" evidence="12">
    <location>
        <position position="17"/>
    </location>
</feature>
<feature type="modified residue" description="N6-glutaryllysine; alternate" evidence="2">
    <location>
        <position position="17"/>
    </location>
</feature>
<feature type="modified residue" description="N6-lactoyllysine; alternate" evidence="16">
    <location>
        <position position="17"/>
    </location>
</feature>
<feature type="modified residue" description="N6-(2-hydroxyisobutyryl)lysine; alternate" evidence="14">
    <location>
        <position position="21"/>
    </location>
</feature>
<feature type="modified residue" description="N6-(beta-hydroxybutyryl)lysine; alternate" evidence="15">
    <location>
        <position position="21"/>
    </location>
</feature>
<feature type="modified residue" description="N6-acetyllysine; alternate" evidence="20">
    <location>
        <position position="21"/>
    </location>
</feature>
<feature type="modified residue" description="N6-butyryllysine; alternate" evidence="2">
    <location>
        <position position="21"/>
    </location>
</feature>
<feature type="modified residue" description="N6-crotonyllysine; alternate" evidence="12">
    <location>
        <position position="21"/>
    </location>
</feature>
<feature type="modified residue" description="N6-lactoyllysine; alternate" evidence="16">
    <location>
        <position position="21"/>
    </location>
</feature>
<feature type="modified residue" description="N6-(2-hydroxyisobutyryl)lysine; alternate" evidence="14">
    <location>
        <position position="24"/>
    </location>
</feature>
<feature type="modified residue" description="N6-acetyllysine; alternate" evidence="2">
    <location>
        <position position="24"/>
    </location>
</feature>
<feature type="modified residue" description="N6-crotonyllysine; alternate" evidence="12">
    <location>
        <position position="24"/>
    </location>
</feature>
<feature type="modified residue" description="N6-lactoyllysine; alternate" evidence="2">
    <location>
        <position position="24"/>
    </location>
</feature>
<feature type="modified residue" description="N6-(2-hydroxyisobutyryl)lysine" evidence="14">
    <location>
        <position position="25"/>
    </location>
</feature>
<feature type="modified residue" description="N6-(2-hydroxyisobutyryl)lysine; alternate" evidence="14">
    <location>
        <position position="35"/>
    </location>
</feature>
<feature type="modified residue" description="N6-(beta-hydroxybutyryl)lysine; alternate" evidence="15">
    <location>
        <position position="35"/>
    </location>
</feature>
<feature type="modified residue" description="N6-crotonyllysine; alternate" evidence="12">
    <location>
        <position position="35"/>
    </location>
</feature>
<feature type="modified residue" description="N6-glutaryllysine; alternate" evidence="2">
    <location>
        <position position="35"/>
    </location>
</feature>
<feature type="modified residue" description="N6-succinyllysine; alternate" evidence="2">
    <location>
        <position position="35"/>
    </location>
</feature>
<feature type="modified residue" description="PolyADP-ribosyl glutamic acid" evidence="17">
    <location>
        <position position="36"/>
    </location>
</feature>
<feature type="modified residue" description="Phosphoserine; by AMPK" evidence="11 17">
    <location>
        <position position="37"/>
    </location>
</feature>
<feature type="modified residue" description="N6-(2-hydroxyisobutyryl)lysine; alternate" evidence="14">
    <location>
        <position position="44"/>
    </location>
</feature>
<feature type="modified residue" description="N6-glutaryllysine; alternate" evidence="2">
    <location>
        <position position="44"/>
    </location>
</feature>
<feature type="modified residue" description="N6-lactoyllysine; alternate" evidence="2">
    <location>
        <position position="44"/>
    </location>
</feature>
<feature type="modified residue" description="N6-(2-hydroxyisobutyryl)lysine; alternate" evidence="14">
    <location>
        <position position="47"/>
    </location>
</feature>
<feature type="modified residue" description="N6-glutaryllysine; alternate" evidence="2">
    <location>
        <position position="47"/>
    </location>
</feature>
<feature type="modified residue" description="N6-methyllysine; alternate" evidence="4">
    <location>
        <position position="47"/>
    </location>
</feature>
<feature type="modified residue" description="N6,N6-dimethyllysine; alternate" evidence="4">
    <location>
        <position position="58"/>
    </location>
</feature>
<feature type="modified residue" description="N6-(2-hydroxyisobutyryl)lysine; alternate" evidence="14">
    <location>
        <position position="58"/>
    </location>
</feature>
<feature type="modified residue" description="Dimethylated arginine" evidence="7">
    <location>
        <position position="80"/>
    </location>
</feature>
<feature type="modified residue" description="N6,N6,N6-trimethyllysine; alternate" evidence="7">
    <location>
        <position position="86"/>
    </location>
</feature>
<feature type="modified residue" description="N6-(2-hydroxyisobutyryl)lysine; alternate" evidence="14">
    <location>
        <position position="86"/>
    </location>
</feature>
<feature type="modified residue" description="N6-acetyllysine; alternate" evidence="7">
    <location>
        <position position="86"/>
    </location>
</feature>
<feature type="modified residue" description="N6-lactoyllysine; alternate" evidence="16">
    <location>
        <position position="86"/>
    </location>
</feature>
<feature type="modified residue" description="Omega-N-methylarginine" evidence="7">
    <location>
        <position position="87"/>
    </location>
</feature>
<feature type="modified residue" description="Omega-N-methylarginine" evidence="7">
    <location>
        <position position="93"/>
    </location>
</feature>
<feature type="modified residue" description="N6-(2-hydroxyisobutyryl)lysine; alternate" evidence="14">
    <location>
        <position position="109"/>
    </location>
</feature>
<feature type="modified residue" description="N6-(beta-hydroxybutyryl)lysine; alternate" evidence="15">
    <location>
        <position position="109"/>
    </location>
</feature>
<feature type="modified residue" description="N6-glutaryllysine; alternate" evidence="2">
    <location>
        <position position="109"/>
    </location>
</feature>
<feature type="modified residue" description="N6-lactoyllysine; alternate" evidence="16">
    <location>
        <position position="109"/>
    </location>
</feature>
<feature type="modified residue" description="N6-methyllysine; alternate" evidence="4">
    <location>
        <position position="109"/>
    </location>
</feature>
<feature type="modified residue" description="Phosphothreonine" evidence="5">
    <location>
        <position position="116"/>
    </location>
</feature>
<feature type="modified residue" description="N6-(2-hydroxyisobutyryl)lysine; alternate" evidence="14">
    <location>
        <position position="117"/>
    </location>
</feature>
<feature type="modified residue" description="N6-(beta-hydroxybutyryl)lysine; alternate" evidence="15">
    <location>
        <position position="117"/>
    </location>
</feature>
<feature type="modified residue" description="N6-glutaryllysine; alternate" evidence="2">
    <location>
        <position position="117"/>
    </location>
</feature>
<feature type="modified residue" description="N6-lactoyllysine; alternate" evidence="16">
    <location>
        <position position="117"/>
    </location>
</feature>
<feature type="modified residue" description="N6-methylated lysine; alternate" evidence="5">
    <location>
        <position position="117"/>
    </location>
</feature>
<feature type="modified residue" description="N6-succinyllysine; alternate" evidence="2">
    <location>
        <position position="117"/>
    </location>
</feature>
<feature type="modified residue" description="N6-(2-hydroxyisobutyryl)lysine; alternate" evidence="14">
    <location>
        <position position="121"/>
    </location>
</feature>
<feature type="modified residue" description="N6-glutaryllysine; alternate" evidence="2">
    <location>
        <position position="121"/>
    </location>
</feature>
<feature type="modified residue" description="N6-lactoyllysine; alternate" evidence="2">
    <location>
        <position position="121"/>
    </location>
</feature>
<feature type="modified residue" description="N6-succinyllysine; alternate" evidence="13">
    <location>
        <position position="121"/>
    </location>
</feature>
<feature type="glycosylation site" description="O-linked (GlcNAc) serine" evidence="4">
    <location>
        <position position="113"/>
    </location>
</feature>
<feature type="cross-link" description="Glycyl lysine isopeptide (Lys-Gly) (interchain with G-Cter in SUMO2); alternate" evidence="3">
    <location>
        <position position="6"/>
    </location>
</feature>
<feature type="cross-link" description="Glycyl lysine isopeptide (Lys-Gly) (interchain with G-Cter in SUMO2); alternate" evidence="6">
    <location>
        <position position="21"/>
    </location>
</feature>
<feature type="cross-link" description="Glycyl lysine isopeptide (Lys-Gly) (interchain with G-Cter in ubiquitin); alternate" evidence="2">
    <location>
        <position position="35"/>
    </location>
</feature>
<feature type="cross-link" description="Glycyl lysine isopeptide (Lys-Gly) (interchain with G-Cter in ubiquitin); alternate" evidence="2">
    <location>
        <position position="121"/>
    </location>
</feature>
<sequence>MPEPSKSAPAPKKGSKKAISKAQKKDGKKRKRSRKESYSVYVYKVLKQVHPDTGISSKAMGIMNSFVNDIFERIASEASRLAHYNKRSTITSREIQTAVRLLLPGELAKHAVSEGTKAVTKYTSSK</sequence>
<dbReference type="EMBL" id="X80328">
    <property type="protein sequence ID" value="CAA56576.1"/>
    <property type="molecule type" value="Genomic_DNA"/>
</dbReference>
<dbReference type="EMBL" id="AY158938">
    <property type="protein sequence ID" value="AAO06248.1"/>
    <property type="molecule type" value="Genomic_DNA"/>
</dbReference>
<dbReference type="EMBL" id="AL590388">
    <property type="status" value="NOT_ANNOTATED_CDS"/>
    <property type="molecule type" value="Genomic_DNA"/>
</dbReference>
<dbReference type="EMBL" id="BC116853">
    <property type="protein sequence ID" value="AAI16854.1"/>
    <property type="molecule type" value="mRNA"/>
</dbReference>
<dbReference type="EMBL" id="BC116857">
    <property type="protein sequence ID" value="AAI16858.1"/>
    <property type="molecule type" value="mRNA"/>
</dbReference>
<dbReference type="CCDS" id="CCDS26363.1"/>
<dbReference type="PIR" id="I48375">
    <property type="entry name" value="I48375"/>
</dbReference>
<dbReference type="RefSeq" id="NP_783595.1">
    <property type="nucleotide sequence ID" value="NM_175664.3"/>
</dbReference>
<dbReference type="SMR" id="Q64475"/>
<dbReference type="BioGRID" id="235097">
    <property type="interactions" value="10"/>
</dbReference>
<dbReference type="FunCoup" id="Q64475">
    <property type="interactions" value="1571"/>
</dbReference>
<dbReference type="STRING" id="10090.ENSMUSP00000097294"/>
<dbReference type="GlyCosmos" id="Q64475">
    <property type="glycosylation" value="1 site, No reported glycans"/>
</dbReference>
<dbReference type="GlyGen" id="Q64475">
    <property type="glycosylation" value="1 site"/>
</dbReference>
<dbReference type="iPTMnet" id="Q64475"/>
<dbReference type="PhosphoSitePlus" id="Q64475"/>
<dbReference type="SwissPalm" id="Q64475"/>
<dbReference type="jPOST" id="Q64475"/>
<dbReference type="PaxDb" id="10090-ENSMUSP00000097294"/>
<dbReference type="PeptideAtlas" id="Q64475"/>
<dbReference type="ProteomicsDB" id="269666"/>
<dbReference type="TopDownProteomics" id="Q64475"/>
<dbReference type="Antibodypedia" id="74509">
    <property type="antibodies" value="32 antibodies from 12 providers"/>
</dbReference>
<dbReference type="DNASU" id="319178"/>
<dbReference type="Ensembl" id="ENSMUST00000099703.5">
    <property type="protein sequence ID" value="ENSMUSP00000097294.3"/>
    <property type="gene ID" value="ENSMUSG00000075031.5"/>
</dbReference>
<dbReference type="GeneID" id="319178"/>
<dbReference type="KEGG" id="mmu:319178"/>
<dbReference type="UCSC" id="uc007pus.2">
    <property type="organism name" value="mouse"/>
</dbReference>
<dbReference type="AGR" id="MGI:2448377"/>
<dbReference type="CTD" id="3018"/>
<dbReference type="MGI" id="MGI:2448377">
    <property type="gene designation" value="H2bc3"/>
</dbReference>
<dbReference type="VEuPathDB" id="HostDB:ENSMUSG00000075031"/>
<dbReference type="eggNOG" id="KOG1744">
    <property type="taxonomic scope" value="Eukaryota"/>
</dbReference>
<dbReference type="GeneTree" id="ENSGT01110000267152"/>
<dbReference type="HOGENOM" id="CLU_075666_2_1_1"/>
<dbReference type="InParanoid" id="Q64475"/>
<dbReference type="OMA" id="AETYKVY"/>
<dbReference type="OrthoDB" id="9618206at2759"/>
<dbReference type="PhylomeDB" id="Q64475"/>
<dbReference type="TreeFam" id="TF300212"/>
<dbReference type="Reactome" id="R-MMU-110330">
    <property type="pathway name" value="Recognition and association of DNA glycosylase with site containing an affected purine"/>
</dbReference>
<dbReference type="Reactome" id="R-MMU-110331">
    <property type="pathway name" value="Cleavage of the damaged purine"/>
</dbReference>
<dbReference type="Reactome" id="R-MMU-212300">
    <property type="pathway name" value="PRC2 methylates histones and DNA"/>
</dbReference>
<dbReference type="Reactome" id="R-MMU-2299718">
    <property type="pathway name" value="Condensation of Prophase Chromosomes"/>
</dbReference>
<dbReference type="Reactome" id="R-MMU-2559586">
    <property type="pathway name" value="DNA Damage/Telomere Stress Induced Senescence"/>
</dbReference>
<dbReference type="Reactome" id="R-MMU-3214815">
    <property type="pathway name" value="HDACs deacetylate histones"/>
</dbReference>
<dbReference type="Reactome" id="R-MMU-3214847">
    <property type="pathway name" value="HATs acetylate histones"/>
</dbReference>
<dbReference type="Reactome" id="R-MMU-5693565">
    <property type="pathway name" value="Recruitment and ATM-mediated phosphorylation of repair and signaling proteins at DNA double strand breaks"/>
</dbReference>
<dbReference type="Reactome" id="R-MMU-5693571">
    <property type="pathway name" value="Nonhomologous End-Joining (NHEJ)"/>
</dbReference>
<dbReference type="Reactome" id="R-MMU-5693607">
    <property type="pathway name" value="Processing of DNA double-strand break ends"/>
</dbReference>
<dbReference type="Reactome" id="R-MMU-606279">
    <property type="pathway name" value="Deposition of new CENPA-containing nucleosomes at the centromere"/>
</dbReference>
<dbReference type="Reactome" id="R-MMU-69473">
    <property type="pathway name" value="G2/M DNA damage checkpoint"/>
</dbReference>
<dbReference type="Reactome" id="R-MMU-8866654">
    <property type="pathway name" value="E3 ubiquitin ligases ubiquitinate target proteins"/>
</dbReference>
<dbReference type="Reactome" id="R-MMU-8936459">
    <property type="pathway name" value="RUNX1 regulates genes involved in megakaryocyte differentiation and platelet function"/>
</dbReference>
<dbReference type="Reactome" id="R-MMU-9018519">
    <property type="pathway name" value="Estrogen-dependent gene expression"/>
</dbReference>
<dbReference type="Reactome" id="R-MMU-9670095">
    <property type="pathway name" value="Inhibition of DNA recombination at telomere"/>
</dbReference>
<dbReference type="Reactome" id="R-MMU-9841922">
    <property type="pathway name" value="MLL4 and MLL3 complexes regulate expression of PPARG target genes in adipogenesis and hepatic steatosis"/>
</dbReference>
<dbReference type="Reactome" id="R-MMU-9843940">
    <property type="pathway name" value="Regulation of endogenous retroelements by KRAB-ZFP proteins"/>
</dbReference>
<dbReference type="BioGRID-ORCS" id="319178">
    <property type="hits" value="4 hits in 80 CRISPR screens"/>
</dbReference>
<dbReference type="PRO" id="PR:Q64475"/>
<dbReference type="Proteomes" id="UP000000589">
    <property type="component" value="Chromosome 13"/>
</dbReference>
<dbReference type="RNAct" id="Q64475">
    <property type="molecule type" value="protein"/>
</dbReference>
<dbReference type="Bgee" id="ENSMUSG00000075031">
    <property type="expression patterns" value="Expressed in uterus and 58 other cell types or tissues"/>
</dbReference>
<dbReference type="GO" id="GO:0005829">
    <property type="term" value="C:cytosol"/>
    <property type="evidence" value="ECO:0007669"/>
    <property type="project" value="Ensembl"/>
</dbReference>
<dbReference type="GO" id="GO:0005654">
    <property type="term" value="C:nucleoplasm"/>
    <property type="evidence" value="ECO:0000304"/>
    <property type="project" value="Reactome"/>
</dbReference>
<dbReference type="GO" id="GO:0000786">
    <property type="term" value="C:nucleosome"/>
    <property type="evidence" value="ECO:0007669"/>
    <property type="project" value="UniProtKB-KW"/>
</dbReference>
<dbReference type="GO" id="GO:0003677">
    <property type="term" value="F:DNA binding"/>
    <property type="evidence" value="ECO:0007669"/>
    <property type="project" value="UniProtKB-KW"/>
</dbReference>
<dbReference type="GO" id="GO:0046982">
    <property type="term" value="F:protein heterodimerization activity"/>
    <property type="evidence" value="ECO:0007669"/>
    <property type="project" value="InterPro"/>
</dbReference>
<dbReference type="GO" id="GO:0030527">
    <property type="term" value="F:structural constituent of chromatin"/>
    <property type="evidence" value="ECO:0007669"/>
    <property type="project" value="InterPro"/>
</dbReference>
<dbReference type="CDD" id="cd22910">
    <property type="entry name" value="HFD_H2B"/>
    <property type="match status" value="1"/>
</dbReference>
<dbReference type="FunFam" id="1.10.20.10:FF:000003">
    <property type="entry name" value="Histone H2B"/>
    <property type="match status" value="1"/>
</dbReference>
<dbReference type="Gene3D" id="1.10.20.10">
    <property type="entry name" value="Histone, subunit A"/>
    <property type="match status" value="1"/>
</dbReference>
<dbReference type="InterPro" id="IPR009072">
    <property type="entry name" value="Histone-fold"/>
</dbReference>
<dbReference type="InterPro" id="IPR007125">
    <property type="entry name" value="Histone_H2A/H2B/H3"/>
</dbReference>
<dbReference type="InterPro" id="IPR000558">
    <property type="entry name" value="Histone_H2B"/>
</dbReference>
<dbReference type="InterPro" id="IPR055333">
    <property type="entry name" value="HISTONE_H2B_site"/>
</dbReference>
<dbReference type="PANTHER" id="PTHR23428">
    <property type="entry name" value="HISTONE H2B"/>
    <property type="match status" value="1"/>
</dbReference>
<dbReference type="Pfam" id="PF00125">
    <property type="entry name" value="Histone"/>
    <property type="match status" value="1"/>
</dbReference>
<dbReference type="PRINTS" id="PR00621">
    <property type="entry name" value="HISTONEH2B"/>
</dbReference>
<dbReference type="SMART" id="SM00427">
    <property type="entry name" value="H2B"/>
    <property type="match status" value="1"/>
</dbReference>
<dbReference type="SUPFAM" id="SSF47113">
    <property type="entry name" value="Histone-fold"/>
    <property type="match status" value="1"/>
</dbReference>
<dbReference type="PROSITE" id="PS00357">
    <property type="entry name" value="HISTONE_H2B"/>
    <property type="match status" value="1"/>
</dbReference>
<keyword id="KW-0007">Acetylation</keyword>
<keyword id="KW-0013">ADP-ribosylation</keyword>
<keyword id="KW-0158">Chromosome</keyword>
<keyword id="KW-0238">DNA-binding</keyword>
<keyword id="KW-0325">Glycoprotein</keyword>
<keyword id="KW-0379">Hydroxylation</keyword>
<keyword id="KW-1017">Isopeptide bond</keyword>
<keyword id="KW-0488">Methylation</keyword>
<keyword id="KW-0544">Nucleosome core</keyword>
<keyword id="KW-0539">Nucleus</keyword>
<keyword id="KW-0597">Phosphoprotein</keyword>
<keyword id="KW-1185">Reference proteome</keyword>
<keyword id="KW-0832">Ubl conjugation</keyword>
<gene>
    <name evidence="19" type="primary">H2bc3</name>
    <name evidence="19" type="synonym">Hist1h2bb</name>
</gene>
<protein>
    <recommendedName>
        <fullName>Histone H2B type 1-B</fullName>
    </recommendedName>
    <alternativeName>
        <fullName evidence="19">H2B-clustered histone 3</fullName>
    </alternativeName>
    <alternativeName>
        <fullName>h2B-143</fullName>
    </alternativeName>
</protein>
<accession>Q64475</accession>
<accession>Q14AF8</accession>
<evidence type="ECO:0000250" key="1">
    <source>
        <dbReference type="UniProtKB" id="P23527"/>
    </source>
</evidence>
<evidence type="ECO:0000250" key="2">
    <source>
        <dbReference type="UniProtKB" id="P33778"/>
    </source>
</evidence>
<evidence type="ECO:0000250" key="3">
    <source>
        <dbReference type="UniProtKB" id="P58876"/>
    </source>
</evidence>
<evidence type="ECO:0000250" key="4">
    <source>
        <dbReference type="UniProtKB" id="P62807"/>
    </source>
</evidence>
<evidence type="ECO:0000250" key="5">
    <source>
        <dbReference type="UniProtKB" id="Q00729"/>
    </source>
</evidence>
<evidence type="ECO:0000250" key="6">
    <source>
        <dbReference type="UniProtKB" id="Q5QNW6"/>
    </source>
</evidence>
<evidence type="ECO:0000250" key="7">
    <source>
        <dbReference type="UniProtKB" id="Q96A08"/>
    </source>
</evidence>
<evidence type="ECO:0000256" key="8">
    <source>
        <dbReference type="SAM" id="MobiDB-lite"/>
    </source>
</evidence>
<evidence type="ECO:0000269" key="9">
    <source>
    </source>
</evidence>
<evidence type="ECO:0000269" key="10">
    <source>
    </source>
</evidence>
<evidence type="ECO:0000269" key="11">
    <source>
    </source>
</evidence>
<evidence type="ECO:0000269" key="12">
    <source>
    </source>
</evidence>
<evidence type="ECO:0000269" key="13">
    <source>
    </source>
</evidence>
<evidence type="ECO:0000269" key="14">
    <source>
    </source>
</evidence>
<evidence type="ECO:0000269" key="15">
    <source>
    </source>
</evidence>
<evidence type="ECO:0000269" key="16">
    <source>
    </source>
</evidence>
<evidence type="ECO:0000269" key="17">
    <source>
    </source>
</evidence>
<evidence type="ECO:0000305" key="18"/>
<evidence type="ECO:0000312" key="19">
    <source>
        <dbReference type="MGI" id="MGI:2448377"/>
    </source>
</evidence>
<evidence type="ECO:0007744" key="20">
    <source>
    </source>
</evidence>
<reference key="1">
    <citation type="journal article" date="1996" name="Biochim. Biophys. Acta">
        <title>Structure of a cluster of mouse histone genes.</title>
        <authorList>
            <person name="Brown V.D."/>
            <person name="Wang Z.-F."/>
            <person name="Williams A.S."/>
            <person name="Marzluff W.F."/>
        </authorList>
    </citation>
    <scope>NUCLEOTIDE SEQUENCE [GENOMIC DNA]</scope>
</reference>
<reference key="2">
    <citation type="journal article" date="2002" name="Genomics">
        <title>The human and mouse replication-dependent histone genes.</title>
        <authorList>
            <person name="Marzluff W.F."/>
            <person name="Gongidi P."/>
            <person name="Woods K.R."/>
            <person name="Jin J."/>
            <person name="Maltais L.J."/>
        </authorList>
    </citation>
    <scope>NUCLEOTIDE SEQUENCE [GENOMIC DNA]</scope>
</reference>
<reference key="3">
    <citation type="journal article" date="2009" name="PLoS Biol.">
        <title>Lineage-specific biology revealed by a finished genome assembly of the mouse.</title>
        <authorList>
            <person name="Church D.M."/>
            <person name="Goodstadt L."/>
            <person name="Hillier L.W."/>
            <person name="Zody M.C."/>
            <person name="Goldstein S."/>
            <person name="She X."/>
            <person name="Bult C.J."/>
            <person name="Agarwala R."/>
            <person name="Cherry J.L."/>
            <person name="DiCuccio M."/>
            <person name="Hlavina W."/>
            <person name="Kapustin Y."/>
            <person name="Meric P."/>
            <person name="Maglott D."/>
            <person name="Birtle Z."/>
            <person name="Marques A.C."/>
            <person name="Graves T."/>
            <person name="Zhou S."/>
            <person name="Teague B."/>
            <person name="Potamousis K."/>
            <person name="Churas C."/>
            <person name="Place M."/>
            <person name="Herschleb J."/>
            <person name="Runnheim R."/>
            <person name="Forrest D."/>
            <person name="Amos-Landgraf J."/>
            <person name="Schwartz D.C."/>
            <person name="Cheng Z."/>
            <person name="Lindblad-Toh K."/>
            <person name="Eichler E.E."/>
            <person name="Ponting C.P."/>
        </authorList>
    </citation>
    <scope>NUCLEOTIDE SEQUENCE [LARGE SCALE GENOMIC DNA]</scope>
    <source>
        <strain>C57BL/6J</strain>
    </source>
</reference>
<reference key="4">
    <citation type="journal article" date="2004" name="Genome Res.">
        <title>The status, quality, and expansion of the NIH full-length cDNA project: the Mammalian Gene Collection (MGC).</title>
        <authorList>
            <consortium name="The MGC Project Team"/>
        </authorList>
    </citation>
    <scope>NUCLEOTIDE SEQUENCE [LARGE SCALE MRNA]</scope>
    <source>
        <tissue>Testis</tissue>
    </source>
</reference>
<reference key="5">
    <citation type="journal article" date="2004" name="J. Exp. Med.">
        <title>Phosphorylation of histone H2B at DNA double-strand breaks.</title>
        <authorList>
            <person name="Fernandez-Capetillo O."/>
            <person name="Allis C.D."/>
            <person name="Nussenzweig A."/>
        </authorList>
    </citation>
    <scope>PHOSPHORYLATION AT SER-15</scope>
</reference>
<reference key="6">
    <citation type="journal article" date="2005" name="Immunity">
        <title>Histone modifications associated with somatic hypermutation.</title>
        <authorList>
            <person name="Odegard V.H."/>
            <person name="Kim S.T."/>
            <person name="Anderson S.M."/>
            <person name="Shlomchik M.J."/>
            <person name="Schatz D.G."/>
        </authorList>
    </citation>
    <scope>PHOSPHORYLATION AT SER-15</scope>
</reference>
<reference key="7">
    <citation type="journal article" date="2010" name="Science">
        <title>Signaling kinase AMPK activates stress-promoted transcription via histone H2B phosphorylation.</title>
        <authorList>
            <person name="Bungard D."/>
            <person name="Fuerth B.J."/>
            <person name="Zeng P.Y."/>
            <person name="Faubert B."/>
            <person name="Maas N.L."/>
            <person name="Viollet B."/>
            <person name="Carling D."/>
            <person name="Thompson C.B."/>
            <person name="Jones R.G."/>
            <person name="Berger S.L."/>
        </authorList>
    </citation>
    <scope>PHOSPHORYLATION AT SER-37</scope>
</reference>
<reference key="8">
    <citation type="journal article" date="2011" name="Cell">
        <title>Identification of 67 histone marks and histone lysine crotonylation as a new type of histone modification.</title>
        <authorList>
            <person name="Tan M."/>
            <person name="Luo H."/>
            <person name="Lee S."/>
            <person name="Jin F."/>
            <person name="Yang J.S."/>
            <person name="Montellier E."/>
            <person name="Buchou T."/>
            <person name="Cheng Z."/>
            <person name="Rousseaux S."/>
            <person name="Rajagopal N."/>
            <person name="Lu Z."/>
            <person name="Ye Z."/>
            <person name="Zhu Q."/>
            <person name="Wysocka J."/>
            <person name="Ye Y."/>
            <person name="Khochbin S."/>
            <person name="Ren B."/>
            <person name="Zhao Y."/>
        </authorList>
    </citation>
    <scope>CROTONYLATION AT LYS-6; LYS-12; LYS-13; LYS-16; LYS-17; LYS-21; LYS-24 AND LYS-35</scope>
</reference>
<reference key="9">
    <citation type="journal article" date="2012" name="Mol. Cell. Proteomics">
        <title>Lysine succinylation and lysine malonylation in histones.</title>
        <authorList>
            <person name="Xie Z."/>
            <person name="Dai J."/>
            <person name="Dai L."/>
            <person name="Tan M."/>
            <person name="Cheng Z."/>
            <person name="Wu Y."/>
            <person name="Boeke J.D."/>
            <person name="Zhao Y."/>
        </authorList>
    </citation>
    <scope>SUCCINYLATION AT LYS-121</scope>
</reference>
<reference key="10">
    <citation type="journal article" date="2013" name="Mol. Cell">
        <title>SIRT5-mediated lysine desuccinylation impacts diverse metabolic pathways.</title>
        <authorList>
            <person name="Park J."/>
            <person name="Chen Y."/>
            <person name="Tishkoff D.X."/>
            <person name="Peng C."/>
            <person name="Tan M."/>
            <person name="Dai L."/>
            <person name="Xie Z."/>
            <person name="Zhang Y."/>
            <person name="Zwaans B.M."/>
            <person name="Skinner M.E."/>
            <person name="Lombard D.B."/>
            <person name="Zhao Y."/>
        </authorList>
    </citation>
    <scope>ACETYLATION [LARGE SCALE ANALYSIS] AT LYS-6; LYS-12; LYS-17 AND LYS-21</scope>
    <scope>IDENTIFICATION BY MASS SPECTROMETRY [LARGE SCALE ANALYSIS]</scope>
    <source>
        <tissue>Embryonic fibroblast</tissue>
    </source>
</reference>
<reference key="11">
    <citation type="journal article" date="2014" name="Nat. Chem. Biol.">
        <title>Lysine 2-hydroxyisobutyrylation is a widely distributed active histone mark.</title>
        <authorList>
            <person name="Dai L."/>
            <person name="Peng C."/>
            <person name="Montellier E."/>
            <person name="Lu Z."/>
            <person name="Chen Y."/>
            <person name="Ishii H."/>
            <person name="Debernardi A."/>
            <person name="Buchou T."/>
            <person name="Rousseaux S."/>
            <person name="Jin F."/>
            <person name="Sabari B.R."/>
            <person name="Deng Z."/>
            <person name="Allis C.D."/>
            <person name="Ren B."/>
            <person name="Khochbin S."/>
            <person name="Zhao Y."/>
        </authorList>
    </citation>
    <scope>HYDROXYBUTYRYLATION AT LYS-6; LYS-13; LYS-21; LYS-24; LYS-25; LYS-35; LYS-44; LYS-47; LYS-58; LYS-86; LYS-109; LYS-117 AND LYS-121</scope>
</reference>
<reference key="12">
    <citation type="journal article" date="2016" name="Mol. Cell">
        <title>Metabolic regulation of gene expression by histone lysine beta-hydroxybutyrylation.</title>
        <authorList>
            <person name="Xie Z."/>
            <person name="Zhang D."/>
            <person name="Chung D."/>
            <person name="Tang Z."/>
            <person name="Huang H."/>
            <person name="Dai L."/>
            <person name="Qi S."/>
            <person name="Li J."/>
            <person name="Colak G."/>
            <person name="Chen Y."/>
            <person name="Xia C."/>
            <person name="Peng C."/>
            <person name="Ruan H."/>
            <person name="Kirkey M."/>
            <person name="Wang D."/>
            <person name="Jensen L.M."/>
            <person name="Kwon O.K."/>
            <person name="Lee S."/>
            <person name="Pletcher S.D."/>
            <person name="Tan M."/>
            <person name="Lombard D.B."/>
            <person name="White K.P."/>
            <person name="Zhao H."/>
            <person name="Li J."/>
            <person name="Roeder R.G."/>
            <person name="Yang X."/>
            <person name="Zhao Y."/>
        </authorList>
    </citation>
    <scope>HYDROXYBUTYRYLATION AT LYS-6; LYS-12; LYS-21; LYS-35; LYS-109 AND LYS-117</scope>
</reference>
<reference key="13">
    <citation type="journal article" date="2019" name="Nature">
        <title>Metabolic regulation of gene expression by histone lactylation.</title>
        <authorList>
            <person name="Zhang D."/>
            <person name="Tang Z."/>
            <person name="Huang H."/>
            <person name="Zhou G."/>
            <person name="Cui C."/>
            <person name="Weng Y."/>
            <person name="Liu W."/>
            <person name="Kim S."/>
            <person name="Lee S."/>
            <person name="Perez-Neut M."/>
            <person name="Ding J."/>
            <person name="Czyz D."/>
            <person name="Hu R."/>
            <person name="Ye Z."/>
            <person name="He M."/>
            <person name="Zheng Y.G."/>
            <person name="Shuman H.A."/>
            <person name="Dai L."/>
            <person name="Ren B."/>
            <person name="Roeder R.G."/>
            <person name="Becker L."/>
            <person name="Zhao Y."/>
        </authorList>
    </citation>
    <scope>LACTYLATION AT LYS-6; LYS-12; LYS-16; LYS-17; LYS-21; LYS-86; LYS-109 AND LYS-117</scope>
</reference>
<reference key="14">
    <citation type="journal article" date="2020" name="Mol. Cell">
        <title>Functional interplay between histone H2B ADP-ribosylation and phosphorylation controls adipogenesis.</title>
        <authorList>
            <person name="Huang D."/>
            <person name="Camacho C.V."/>
            <person name="Setlem R."/>
            <person name="Ryu K.W."/>
            <person name="Parameswaran B."/>
            <person name="Gupta R.K."/>
            <person name="Kraus W.L."/>
        </authorList>
    </citation>
    <scope>ADP-RIBOSYLATION AT GLU-36</scope>
    <scope>PHOSPHORYLATION AT SER-37</scope>
</reference>
<proteinExistence type="evidence at protein level"/>
<name>H2B1B_MOUSE</name>
<comment type="function">
    <text>Core component of nucleosome. Nucleosomes wrap and compact DNA into chromatin, limiting DNA accessibility to the cellular machineries which require DNA as a template. Histones thereby play a central role in transcription regulation, DNA repair, DNA replication and chromosomal stability. DNA accessibility is regulated via a complex set of post-translational modifications of histones, also called histone code, and nucleosome remodeling.</text>
</comment>
<comment type="subunit">
    <text>The nucleosome is a histone octamer containing two molecules each of H2A, H2B, H3 and H4 assembled in one H3-H4 heterotetramer and two H2A-H2B heterodimers. The octamer wraps approximately 147 bp of DNA.</text>
</comment>
<comment type="subcellular location">
    <subcellularLocation>
        <location>Nucleus</location>
    </subcellularLocation>
    <subcellularLocation>
        <location>Chromosome</location>
    </subcellularLocation>
</comment>
<comment type="PTM">
    <text evidence="2">Monoubiquitination at Lys-35 (H2BK34Ub) by the MSL1/MSL2 dimer is required for histone H3 'Lys-4' (H3K4me) and 'Lys-79' (H3K79me) methylation and transcription activation at specific gene loci, such as HOXA9 and MEIS1 loci. Similarly, monoubiquitination at Lys-121 (H2BK120Ub) by the RNF20/40 complex gives a specific tag for epigenetic transcriptional activation and is also prerequisite for histone H3 'Lys-4' and 'Lys-79' methylation. It also functions cooperatively with the FACT dimer to stimulate elongation by RNA polymerase II. H2BK120Ub also acts as a regulator of mRNA splicing: deubiquitination by USP49 is required for efficient cotranscriptional splicing of a large set of exons (By similarity).</text>
</comment>
<comment type="PTM">
    <text evidence="9 10 11 17">Phosphorylated on Ser-15 (H2BS14ph) by STK4/MST1 during apoptosis; which facilitates apoptotic chromatin condensation (PubMed:15197225, PubMed:16039583). Also phosphorylated on Ser-15 in response to DNA double strand breaks (DSBs), and in correlation with somatic hypermutation and immunoglobulin class-switch recombination (PubMed:15197225). Phosphorylation at Ser-37 (H2BS36ph) by AMPK in response to stress promotes transcription (PubMed:20647423, PubMed:32822587).</text>
</comment>
<comment type="PTM">
    <text evidence="4">GlcNAcylation at Ser-113 promotes monoubiquitination of Lys-121. It fluctuates in response to extracellular glucose, and associates with transcribed genes (By similarity).</text>
</comment>
<comment type="PTM">
    <text evidence="2 17">ADP-ribosylated by PARP1 or PARP2 on Ser-7 (H2BS6ADPr) in response to DNA damage (By similarity). H2BS6ADPr promotes recruitment of CHD1L (By similarity). Mono-ADP-ribosylated on Glu-3 (H2BE2ADPr) by PARP3 in response to single-strand breaks (By similarity). Poly ADP-ribosylation on Glu-36 (H2BE35ADPr) by PARP1 regulates adipogenesis: it inhibits phosphorylation at Ser-37 (H2BS36ph), thereby blocking expression of pro-adipogenetic genes (PubMed:32822587).</text>
</comment>
<comment type="PTM">
    <text evidence="15">Hydroxybutyrylation of histones is induced by starvation.</text>
</comment>
<comment type="PTM">
    <text evidence="12">Crotonylation (Kcr) is specifically present in male germ cells and marks testis-specific genes in post-meiotic cells, including X-linked genes that escape sex chromosome inactivation in haploid cells. Crotonylation marks active promoters and enhancers and confers resistance to transcriptional repressors. It is also associated with post-meiotically activated genes on autosomes.</text>
</comment>
<comment type="PTM">
    <text evidence="2">Lactylated in macrophages by EP300/P300 by using lactoyl-CoA directly derived from endogenous or exogenous lactate, leading to stimulates gene transcription.</text>
</comment>
<comment type="similarity">
    <text evidence="18">Belongs to the histone H2B family.</text>
</comment>
<organism>
    <name type="scientific">Mus musculus</name>
    <name type="common">Mouse</name>
    <dbReference type="NCBI Taxonomy" id="10090"/>
    <lineage>
        <taxon>Eukaryota</taxon>
        <taxon>Metazoa</taxon>
        <taxon>Chordata</taxon>
        <taxon>Craniata</taxon>
        <taxon>Vertebrata</taxon>
        <taxon>Euteleostomi</taxon>
        <taxon>Mammalia</taxon>
        <taxon>Eutheria</taxon>
        <taxon>Euarchontoglires</taxon>
        <taxon>Glires</taxon>
        <taxon>Rodentia</taxon>
        <taxon>Myomorpha</taxon>
        <taxon>Muroidea</taxon>
        <taxon>Muridae</taxon>
        <taxon>Murinae</taxon>
        <taxon>Mus</taxon>
        <taxon>Mus</taxon>
    </lineage>
</organism>